<feature type="chain" id="PRO_0000197515" description="Prophage integrase IntF">
    <location>
        <begin position="1"/>
        <end position="466"/>
    </location>
</feature>
<feature type="domain" description="Core-binding (CB)" evidence="2">
    <location>
        <begin position="134"/>
        <end position="239"/>
    </location>
</feature>
<feature type="domain" description="Tyr recombinase" evidence="1">
    <location>
        <begin position="268"/>
        <end position="445"/>
    </location>
</feature>
<feature type="active site" evidence="1">
    <location>
        <position position="306"/>
    </location>
</feature>
<feature type="active site" evidence="1">
    <location>
        <position position="328"/>
    </location>
</feature>
<feature type="active site" evidence="1">
    <location>
        <position position="396"/>
    </location>
</feature>
<feature type="active site" evidence="1">
    <location>
        <position position="399"/>
    </location>
</feature>
<feature type="active site" evidence="1">
    <location>
        <position position="422"/>
    </location>
</feature>
<feature type="active site" description="O-(3'-phospho-DNA)-tyrosine intermediate" evidence="1">
    <location>
        <position position="432"/>
    </location>
</feature>
<accession>P71298</accession>
<accession>Q2MCE1</accession>
<protein>
    <recommendedName>
        <fullName evidence="3">Prophage integrase IntF</fullName>
    </recommendedName>
    <alternativeName>
        <fullName>Putative prophage CP4-6 integrase</fullName>
    </alternativeName>
</protein>
<reference key="1">
    <citation type="submission" date="1997-01" db="EMBL/GenBank/DDBJ databases">
        <title>Sequence of minutes 4-25 of Escherichia coli.</title>
        <authorList>
            <person name="Chung E."/>
            <person name="Allen E."/>
            <person name="Araujo R."/>
            <person name="Aparicio A.M."/>
            <person name="Davis K."/>
            <person name="Duncan M."/>
            <person name="Federspiel N."/>
            <person name="Hyman R."/>
            <person name="Kalman S."/>
            <person name="Komp C."/>
            <person name="Kurdi O."/>
            <person name="Lew H."/>
            <person name="Lin D."/>
            <person name="Namath A."/>
            <person name="Oefner P."/>
            <person name="Roberts D."/>
            <person name="Schramm S."/>
            <person name="Davis R.W."/>
        </authorList>
    </citation>
    <scope>NUCLEOTIDE SEQUENCE [LARGE SCALE GENOMIC DNA]</scope>
    <source>
        <strain>K12 / MG1655 / ATCC 47076</strain>
    </source>
</reference>
<reference key="2">
    <citation type="journal article" date="1997" name="Science">
        <title>The complete genome sequence of Escherichia coli K-12.</title>
        <authorList>
            <person name="Blattner F.R."/>
            <person name="Plunkett G. III"/>
            <person name="Bloch C.A."/>
            <person name="Perna N.T."/>
            <person name="Burland V."/>
            <person name="Riley M."/>
            <person name="Collado-Vides J."/>
            <person name="Glasner J.D."/>
            <person name="Rode C.K."/>
            <person name="Mayhew G.F."/>
            <person name="Gregor J."/>
            <person name="Davis N.W."/>
            <person name="Kirkpatrick H.A."/>
            <person name="Goeden M.A."/>
            <person name="Rose D.J."/>
            <person name="Mau B."/>
            <person name="Shao Y."/>
        </authorList>
    </citation>
    <scope>NUCLEOTIDE SEQUENCE [LARGE SCALE GENOMIC DNA]</scope>
    <source>
        <strain>K12 / MG1655 / ATCC 47076</strain>
    </source>
</reference>
<reference key="3">
    <citation type="journal article" date="2006" name="Mol. Syst. Biol.">
        <title>Highly accurate genome sequences of Escherichia coli K-12 strains MG1655 and W3110.</title>
        <authorList>
            <person name="Hayashi K."/>
            <person name="Morooka N."/>
            <person name="Yamamoto Y."/>
            <person name="Fujita K."/>
            <person name="Isono K."/>
            <person name="Choi S."/>
            <person name="Ohtsubo E."/>
            <person name="Baba T."/>
            <person name="Wanner B.L."/>
            <person name="Mori H."/>
            <person name="Horiuchi T."/>
        </authorList>
    </citation>
    <scope>NUCLEOTIDE SEQUENCE [LARGE SCALE GENOMIC DNA]</scope>
    <source>
        <strain>K12 / W3110 / ATCC 27325 / DSM 5911</strain>
    </source>
</reference>
<keyword id="KW-0229">DNA integration</keyword>
<keyword id="KW-0233">DNA recombination</keyword>
<keyword id="KW-0238">DNA-binding</keyword>
<keyword id="KW-1185">Reference proteome</keyword>
<keyword id="KW-1179">Viral genome integration</keyword>
<keyword id="KW-1160">Virus entry into host cell</keyword>
<gene>
    <name type="primary">intF</name>
    <name type="synonym">yagO</name>
    <name type="ordered locus">b0281</name>
    <name type="ordered locus">JW0275</name>
</gene>
<organism>
    <name type="scientific">Escherichia coli (strain K12)</name>
    <dbReference type="NCBI Taxonomy" id="83333"/>
    <lineage>
        <taxon>Bacteria</taxon>
        <taxon>Pseudomonadati</taxon>
        <taxon>Pseudomonadota</taxon>
        <taxon>Gammaproteobacteria</taxon>
        <taxon>Enterobacterales</taxon>
        <taxon>Enterobacteriaceae</taxon>
        <taxon>Escherichia</taxon>
    </lineage>
</organism>
<name>INTF_ECOLI</name>
<sequence length="466" mass="53074">MFIPSIYLHQQLHYCKTAILNWSRKMALSRQKFTFERLRRFTLPEGKKQTFLWDADVTTLACRATSGAKAFVFQSVYAGKTLRMTIGNINDWKIDDARAEARRLQTLIDTGIDPRIAKAVKIAEAESLQAESRKTKVTFSVAWEDYLQELRTGISAKTKRPYSTRYIADHINLSSRGGESKKRGQGPTSAGPLASLLNLPLSELTPDYIAAWLSTERQNRPTVTAHAYRLLRAFIKWSNYQKKYQGIIPGDLAQDYNVRKMVPVSASKADDCLQKEQLKSWFSAVRSLNNPIASAYLQVLLLTGARREEIASLRWSDVDFKWSSMRIKDKIEGERIIPLTPYVSELLNVLAQSPNSDVNKEGWVFRSNSKSGKIIEPRSAHNRALVLAELPHISLHGLRRSFGTLAEWVEVPTGIVAQIMGHKPSALAEKHYRRRPLDLLRKWHEKIETWILNEAGITIKNNVDMR</sequence>
<comment type="function">
    <text>Integrase is necessary for integration of the phage into the host genome by site-specific recombination. In conjunction with excisionase, integrase is also necessary for excision of the prophage from the host genome.</text>
</comment>
<comment type="similarity">
    <text evidence="3">Belongs to the 'phage' integrase family.</text>
</comment>
<dbReference type="EMBL" id="U73857">
    <property type="protein sequence ID" value="AAB18010.1"/>
    <property type="molecule type" value="Genomic_DNA"/>
</dbReference>
<dbReference type="EMBL" id="U00096">
    <property type="protein sequence ID" value="AAC73384.1"/>
    <property type="molecule type" value="Genomic_DNA"/>
</dbReference>
<dbReference type="EMBL" id="AP009048">
    <property type="protein sequence ID" value="BAE76065.1"/>
    <property type="molecule type" value="Genomic_DNA"/>
</dbReference>
<dbReference type="PIR" id="A64754">
    <property type="entry name" value="A64754"/>
</dbReference>
<dbReference type="RefSeq" id="NP_414815.1">
    <property type="nucleotide sequence ID" value="NC_000913.3"/>
</dbReference>
<dbReference type="RefSeq" id="WP_001407714.1">
    <property type="nucleotide sequence ID" value="NZ_LN832404.1"/>
</dbReference>
<dbReference type="SMR" id="P71298"/>
<dbReference type="BioGRID" id="4259784">
    <property type="interactions" value="14"/>
</dbReference>
<dbReference type="FunCoup" id="P71298">
    <property type="interactions" value="14"/>
</dbReference>
<dbReference type="IntAct" id="P71298">
    <property type="interactions" value="2"/>
</dbReference>
<dbReference type="STRING" id="511145.b0281"/>
<dbReference type="jPOST" id="P71298"/>
<dbReference type="PaxDb" id="511145-b0281"/>
<dbReference type="EnsemblBacteria" id="AAC73384">
    <property type="protein sequence ID" value="AAC73384"/>
    <property type="gene ID" value="b0281"/>
</dbReference>
<dbReference type="GeneID" id="947351"/>
<dbReference type="KEGG" id="ecj:JW0275"/>
<dbReference type="KEGG" id="eco:b0281"/>
<dbReference type="PATRIC" id="fig|511145.12.peg.285"/>
<dbReference type="EchoBASE" id="EB3324"/>
<dbReference type="eggNOG" id="COG0582">
    <property type="taxonomic scope" value="Bacteria"/>
</dbReference>
<dbReference type="HOGENOM" id="CLU_027562_3_0_6"/>
<dbReference type="InParanoid" id="P71298"/>
<dbReference type="OMA" id="WRSLTMN"/>
<dbReference type="OrthoDB" id="9795573at2"/>
<dbReference type="PhylomeDB" id="P71298"/>
<dbReference type="BioCyc" id="EcoCyc:G6152-MONOMER"/>
<dbReference type="PRO" id="PR:P71298"/>
<dbReference type="Proteomes" id="UP000000625">
    <property type="component" value="Chromosome"/>
</dbReference>
<dbReference type="GO" id="GO:0003677">
    <property type="term" value="F:DNA binding"/>
    <property type="evidence" value="ECO:0007669"/>
    <property type="project" value="UniProtKB-KW"/>
</dbReference>
<dbReference type="GO" id="GO:0008979">
    <property type="term" value="F:prophage integrase activity"/>
    <property type="evidence" value="ECO:0000318"/>
    <property type="project" value="GO_Central"/>
</dbReference>
<dbReference type="GO" id="GO:0006310">
    <property type="term" value="P:DNA recombination"/>
    <property type="evidence" value="ECO:0007669"/>
    <property type="project" value="UniProtKB-KW"/>
</dbReference>
<dbReference type="GO" id="GO:0032359">
    <property type="term" value="P:provirus excision"/>
    <property type="evidence" value="ECO:0000318"/>
    <property type="project" value="GO_Central"/>
</dbReference>
<dbReference type="GO" id="GO:0010165">
    <property type="term" value="P:response to X-ray"/>
    <property type="evidence" value="ECO:0000315"/>
    <property type="project" value="EcoCyc"/>
</dbReference>
<dbReference type="GO" id="GO:0046718">
    <property type="term" value="P:symbiont entry into host cell"/>
    <property type="evidence" value="ECO:0007669"/>
    <property type="project" value="UniProtKB-KW"/>
</dbReference>
<dbReference type="GO" id="GO:0044826">
    <property type="term" value="P:viral genome integration into host DNA"/>
    <property type="evidence" value="ECO:0007669"/>
    <property type="project" value="UniProtKB-KW"/>
</dbReference>
<dbReference type="FunFam" id="1.10.443.10:FF:000015">
    <property type="entry name" value="Prophage integrase IntF"/>
    <property type="match status" value="1"/>
</dbReference>
<dbReference type="Gene3D" id="3.30.160.390">
    <property type="entry name" value="Integrase, DNA-binding domain"/>
    <property type="match status" value="1"/>
</dbReference>
<dbReference type="Gene3D" id="1.10.443.10">
    <property type="entry name" value="Intergrase catalytic core"/>
    <property type="match status" value="1"/>
</dbReference>
<dbReference type="InterPro" id="IPR044068">
    <property type="entry name" value="CB"/>
</dbReference>
<dbReference type="InterPro" id="IPR011010">
    <property type="entry name" value="DNA_brk_join_enz"/>
</dbReference>
<dbReference type="InterPro" id="IPR013762">
    <property type="entry name" value="Integrase-like_cat_sf"/>
</dbReference>
<dbReference type="InterPro" id="IPR002104">
    <property type="entry name" value="Integrase_catalytic"/>
</dbReference>
<dbReference type="InterPro" id="IPR038488">
    <property type="entry name" value="Integrase_DNA-bd_sf"/>
</dbReference>
<dbReference type="InterPro" id="IPR025166">
    <property type="entry name" value="Integrase_DNA_bind_dom"/>
</dbReference>
<dbReference type="InterPro" id="IPR050808">
    <property type="entry name" value="Phage_Integrase"/>
</dbReference>
<dbReference type="PANTHER" id="PTHR30629">
    <property type="entry name" value="PROPHAGE INTEGRASE"/>
    <property type="match status" value="1"/>
</dbReference>
<dbReference type="PANTHER" id="PTHR30629:SF6">
    <property type="entry name" value="PROPHAGE INTEGRASE INTA-RELATED"/>
    <property type="match status" value="1"/>
</dbReference>
<dbReference type="Pfam" id="PF13356">
    <property type="entry name" value="Arm-DNA-bind_3"/>
    <property type="match status" value="1"/>
</dbReference>
<dbReference type="Pfam" id="PF00589">
    <property type="entry name" value="Phage_integrase"/>
    <property type="match status" value="1"/>
</dbReference>
<dbReference type="SUPFAM" id="SSF56349">
    <property type="entry name" value="DNA breaking-rejoining enzymes"/>
    <property type="match status" value="1"/>
</dbReference>
<dbReference type="PROSITE" id="PS51900">
    <property type="entry name" value="CB"/>
    <property type="match status" value="1"/>
</dbReference>
<dbReference type="PROSITE" id="PS51898">
    <property type="entry name" value="TYR_RECOMBINASE"/>
    <property type="match status" value="1"/>
</dbReference>
<evidence type="ECO:0000255" key="1">
    <source>
        <dbReference type="PROSITE-ProRule" id="PRU01246"/>
    </source>
</evidence>
<evidence type="ECO:0000255" key="2">
    <source>
        <dbReference type="PROSITE-ProRule" id="PRU01248"/>
    </source>
</evidence>
<evidence type="ECO:0000305" key="3"/>
<proteinExistence type="inferred from homology"/>